<protein>
    <recommendedName>
        <fullName evidence="1">Phosphoribosylformylglycinamidine synthase subunit PurL</fullName>
        <shortName evidence="1">FGAM synthase</shortName>
        <ecNumber evidence="1">6.3.5.3</ecNumber>
    </recommendedName>
    <alternativeName>
        <fullName evidence="1">Formylglycinamide ribonucleotide amidotransferase subunit II</fullName>
        <shortName evidence="1">FGAR amidotransferase II</shortName>
        <shortName evidence="1">FGAR-AT II</shortName>
    </alternativeName>
    <alternativeName>
        <fullName evidence="1">Glutamine amidotransferase PurL</fullName>
    </alternativeName>
    <alternativeName>
        <fullName evidence="1">Phosphoribosylformylglycinamidine synthase subunit II</fullName>
    </alternativeName>
</protein>
<gene>
    <name evidence="1" type="primary">purL</name>
    <name type="ordered locus">BOV_0829</name>
</gene>
<organism>
    <name type="scientific">Brucella ovis (strain ATCC 25840 / 63/290 / NCTC 10512)</name>
    <dbReference type="NCBI Taxonomy" id="444178"/>
    <lineage>
        <taxon>Bacteria</taxon>
        <taxon>Pseudomonadati</taxon>
        <taxon>Pseudomonadota</taxon>
        <taxon>Alphaproteobacteria</taxon>
        <taxon>Hyphomicrobiales</taxon>
        <taxon>Brucellaceae</taxon>
        <taxon>Brucella/Ochrobactrum group</taxon>
        <taxon>Brucella</taxon>
    </lineage>
</organism>
<sequence length="740" mass="79117">MTISNTRDITPELIEAHGLKPDEYQRILELIGREPTFTELGIFSAMWNEHCSYKSSKKWLRTLPTSGPRVIQGPGENAGVVDIGDGDCVVFKMESHNHPSYIEPYQGAATGVGGILRDVFTMGARPVAAMNALRFGEPDHPKTRHLVSGVVSGVGGYGNAFGVPTVGGEVNFDKRYNGNILVNAFAAGLARHDGIFLSEAKGVGLPVVYLGAKTGRDGVGGATMASAEFDESIEEKRPTVQVGDPFTEKCLLEACLELMASGAVIAIQDMGAAGLTCSAVEMGAKGDLGIELILDHVPVREENMTAYEMMLSESQERMLMVLKPEKEAEAQAIFRKWGLDFAIVGKTTDDLRFRVIHQGEEVANLPIKDLGDEAPEYDRPWMEPGKHAPLPASNVPQVEDYSAALLKLIGSPDLSSRRWVYEQYDTLIQGNSLQVPGGDAGVIRVEGHETKALAFSSDVTPRYCEADPFEGGKQAVAECWRNITATGAEPLASTDNLNFGNPEKPEIMGQLVKAIEGIGEACRALDFPIVSGNVSLYNETNGQAILPTPTIAGVGLLPDWSQMAKIGGMQDGDTLVLLGGDGTHLGQSVYLRDLFDRADGPAPFVDLALEKRNGEFVRSAIRNGQVTACHDLSDGGLAIAVAEMAIKSGKGATLDAGDGLPHALLFGEDQARYVISATPEMAKLIALNAEGAGVPFRILGTVGGDRLKISKNVDVSVADLTQAYEGWFPNFMNGELTGNN</sequence>
<accession>A5VQ15</accession>
<comment type="function">
    <text evidence="1">Part of the phosphoribosylformylglycinamidine synthase complex involved in the purines biosynthetic pathway. Catalyzes the ATP-dependent conversion of formylglycinamide ribonucleotide (FGAR) and glutamine to yield formylglycinamidine ribonucleotide (FGAM) and glutamate. The FGAM synthase complex is composed of three subunits. PurQ produces an ammonia molecule by converting glutamine to glutamate. PurL transfers the ammonia molecule to FGAR to form FGAM in an ATP-dependent manner. PurS interacts with PurQ and PurL and is thought to assist in the transfer of the ammonia molecule from PurQ to PurL.</text>
</comment>
<comment type="catalytic activity">
    <reaction evidence="1">
        <text>N(2)-formyl-N(1)-(5-phospho-beta-D-ribosyl)glycinamide + L-glutamine + ATP + H2O = 2-formamido-N(1)-(5-O-phospho-beta-D-ribosyl)acetamidine + L-glutamate + ADP + phosphate + H(+)</text>
        <dbReference type="Rhea" id="RHEA:17129"/>
        <dbReference type="ChEBI" id="CHEBI:15377"/>
        <dbReference type="ChEBI" id="CHEBI:15378"/>
        <dbReference type="ChEBI" id="CHEBI:29985"/>
        <dbReference type="ChEBI" id="CHEBI:30616"/>
        <dbReference type="ChEBI" id="CHEBI:43474"/>
        <dbReference type="ChEBI" id="CHEBI:58359"/>
        <dbReference type="ChEBI" id="CHEBI:147286"/>
        <dbReference type="ChEBI" id="CHEBI:147287"/>
        <dbReference type="ChEBI" id="CHEBI:456216"/>
        <dbReference type="EC" id="6.3.5.3"/>
    </reaction>
</comment>
<comment type="pathway">
    <text evidence="1">Purine metabolism; IMP biosynthesis via de novo pathway; 5-amino-1-(5-phospho-D-ribosyl)imidazole from N(2)-formyl-N(1)-(5-phospho-D-ribosyl)glycinamide: step 1/2.</text>
</comment>
<comment type="subunit">
    <text evidence="1">Monomer. Part of the FGAM synthase complex composed of 1 PurL, 1 PurQ and 2 PurS subunits.</text>
</comment>
<comment type="subcellular location">
    <subcellularLocation>
        <location evidence="1">Cytoplasm</location>
    </subcellularLocation>
</comment>
<comment type="similarity">
    <text evidence="1">Belongs to the FGAMS family.</text>
</comment>
<reference key="1">
    <citation type="journal article" date="2009" name="PLoS ONE">
        <title>Genome degradation in Brucella ovis corresponds with narrowing of its host range and tissue tropism.</title>
        <authorList>
            <person name="Tsolis R.M."/>
            <person name="Seshadri R."/>
            <person name="Santos R.L."/>
            <person name="Sangari F.J."/>
            <person name="Lobo J.M."/>
            <person name="de Jong M.F."/>
            <person name="Ren Q."/>
            <person name="Myers G."/>
            <person name="Brinkac L.M."/>
            <person name="Nelson W.C."/>
            <person name="Deboy R.T."/>
            <person name="Angiuoli S."/>
            <person name="Khouri H."/>
            <person name="Dimitrov G."/>
            <person name="Robinson J.R."/>
            <person name="Mulligan S."/>
            <person name="Walker R.L."/>
            <person name="Elzer P.E."/>
            <person name="Hassan K.A."/>
            <person name="Paulsen I.T."/>
        </authorList>
    </citation>
    <scope>NUCLEOTIDE SEQUENCE [LARGE SCALE GENOMIC DNA]</scope>
    <source>
        <strain>ATCC 25840 / 63/290 / NCTC 10512</strain>
    </source>
</reference>
<name>PURL_BRUO2</name>
<dbReference type="EC" id="6.3.5.3" evidence="1"/>
<dbReference type="EMBL" id="CP000708">
    <property type="protein sequence ID" value="ABQ61053.1"/>
    <property type="molecule type" value="Genomic_DNA"/>
</dbReference>
<dbReference type="RefSeq" id="WP_004688249.1">
    <property type="nucleotide sequence ID" value="NC_009505.1"/>
</dbReference>
<dbReference type="SMR" id="A5VQ15"/>
<dbReference type="GeneID" id="97533862"/>
<dbReference type="KEGG" id="bov:BOV_0829"/>
<dbReference type="HOGENOM" id="CLU_003100_0_1_5"/>
<dbReference type="UniPathway" id="UPA00074">
    <property type="reaction ID" value="UER00128"/>
</dbReference>
<dbReference type="PRO" id="PR:A5VQ15"/>
<dbReference type="Proteomes" id="UP000006383">
    <property type="component" value="Chromosome I"/>
</dbReference>
<dbReference type="GO" id="GO:0005737">
    <property type="term" value="C:cytoplasm"/>
    <property type="evidence" value="ECO:0007669"/>
    <property type="project" value="UniProtKB-SubCell"/>
</dbReference>
<dbReference type="GO" id="GO:0005524">
    <property type="term" value="F:ATP binding"/>
    <property type="evidence" value="ECO:0007669"/>
    <property type="project" value="UniProtKB-UniRule"/>
</dbReference>
<dbReference type="GO" id="GO:0000287">
    <property type="term" value="F:magnesium ion binding"/>
    <property type="evidence" value="ECO:0007669"/>
    <property type="project" value="UniProtKB-UniRule"/>
</dbReference>
<dbReference type="GO" id="GO:0004642">
    <property type="term" value="F:phosphoribosylformylglycinamidine synthase activity"/>
    <property type="evidence" value="ECO:0007669"/>
    <property type="project" value="UniProtKB-UniRule"/>
</dbReference>
<dbReference type="GO" id="GO:0006189">
    <property type="term" value="P:'de novo' IMP biosynthetic process"/>
    <property type="evidence" value="ECO:0007669"/>
    <property type="project" value="UniProtKB-UniRule"/>
</dbReference>
<dbReference type="CDD" id="cd02203">
    <property type="entry name" value="PurL_repeat1"/>
    <property type="match status" value="1"/>
</dbReference>
<dbReference type="CDD" id="cd02204">
    <property type="entry name" value="PurL_repeat2"/>
    <property type="match status" value="1"/>
</dbReference>
<dbReference type="FunFam" id="3.30.1330.10:FF:000004">
    <property type="entry name" value="Phosphoribosylformylglycinamidine synthase subunit PurL"/>
    <property type="match status" value="1"/>
</dbReference>
<dbReference type="Gene3D" id="3.90.650.10">
    <property type="entry name" value="PurM-like C-terminal domain"/>
    <property type="match status" value="2"/>
</dbReference>
<dbReference type="Gene3D" id="3.30.1330.10">
    <property type="entry name" value="PurM-like, N-terminal domain"/>
    <property type="match status" value="2"/>
</dbReference>
<dbReference type="HAMAP" id="MF_00420">
    <property type="entry name" value="PurL_2"/>
    <property type="match status" value="1"/>
</dbReference>
<dbReference type="InterPro" id="IPR010074">
    <property type="entry name" value="PRibForGlyAmidine_synth_PurL"/>
</dbReference>
<dbReference type="InterPro" id="IPR041609">
    <property type="entry name" value="PurL_linker"/>
</dbReference>
<dbReference type="InterPro" id="IPR010918">
    <property type="entry name" value="PurM-like_C_dom"/>
</dbReference>
<dbReference type="InterPro" id="IPR036676">
    <property type="entry name" value="PurM-like_C_sf"/>
</dbReference>
<dbReference type="InterPro" id="IPR016188">
    <property type="entry name" value="PurM-like_N"/>
</dbReference>
<dbReference type="InterPro" id="IPR036921">
    <property type="entry name" value="PurM-like_N_sf"/>
</dbReference>
<dbReference type="NCBIfam" id="TIGR01736">
    <property type="entry name" value="FGAM_synth_II"/>
    <property type="match status" value="1"/>
</dbReference>
<dbReference type="NCBIfam" id="NF002290">
    <property type="entry name" value="PRK01213.1"/>
    <property type="match status" value="1"/>
</dbReference>
<dbReference type="PANTHER" id="PTHR43555">
    <property type="entry name" value="PHOSPHORIBOSYLFORMYLGLYCINAMIDINE SYNTHASE SUBUNIT PURL"/>
    <property type="match status" value="1"/>
</dbReference>
<dbReference type="PANTHER" id="PTHR43555:SF1">
    <property type="entry name" value="PHOSPHORIBOSYLFORMYLGLYCINAMIDINE SYNTHASE SUBUNIT PURL"/>
    <property type="match status" value="1"/>
</dbReference>
<dbReference type="Pfam" id="PF00586">
    <property type="entry name" value="AIRS"/>
    <property type="match status" value="2"/>
</dbReference>
<dbReference type="Pfam" id="PF02769">
    <property type="entry name" value="AIRS_C"/>
    <property type="match status" value="2"/>
</dbReference>
<dbReference type="Pfam" id="PF18072">
    <property type="entry name" value="FGAR-AT_linker"/>
    <property type="match status" value="1"/>
</dbReference>
<dbReference type="PIRSF" id="PIRSF001587">
    <property type="entry name" value="FGAM_synthase_II"/>
    <property type="match status" value="1"/>
</dbReference>
<dbReference type="SUPFAM" id="SSF56042">
    <property type="entry name" value="PurM C-terminal domain-like"/>
    <property type="match status" value="2"/>
</dbReference>
<dbReference type="SUPFAM" id="SSF55326">
    <property type="entry name" value="PurM N-terminal domain-like"/>
    <property type="match status" value="2"/>
</dbReference>
<evidence type="ECO:0000255" key="1">
    <source>
        <dbReference type="HAMAP-Rule" id="MF_00420"/>
    </source>
</evidence>
<proteinExistence type="inferred from homology"/>
<keyword id="KW-0067">ATP-binding</keyword>
<keyword id="KW-0963">Cytoplasm</keyword>
<keyword id="KW-0436">Ligase</keyword>
<keyword id="KW-0460">Magnesium</keyword>
<keyword id="KW-0479">Metal-binding</keyword>
<keyword id="KW-0547">Nucleotide-binding</keyword>
<keyword id="KW-0658">Purine biosynthesis</keyword>
<feature type="chain" id="PRO_1000050301" description="Phosphoribosylformylglycinamidine synthase subunit PurL">
    <location>
        <begin position="1"/>
        <end position="740"/>
    </location>
</feature>
<feature type="active site" evidence="1">
    <location>
        <position position="50"/>
    </location>
</feature>
<feature type="active site" description="Proton acceptor" evidence="1">
    <location>
        <position position="96"/>
    </location>
</feature>
<feature type="binding site" evidence="1">
    <location>
        <position position="53"/>
    </location>
    <ligand>
        <name>ATP</name>
        <dbReference type="ChEBI" id="CHEBI:30616"/>
    </ligand>
</feature>
<feature type="binding site" evidence="1">
    <location>
        <position position="92"/>
    </location>
    <ligand>
        <name>ATP</name>
        <dbReference type="ChEBI" id="CHEBI:30616"/>
    </ligand>
</feature>
<feature type="binding site" evidence="1">
    <location>
        <position position="94"/>
    </location>
    <ligand>
        <name>Mg(2+)</name>
        <dbReference type="ChEBI" id="CHEBI:18420"/>
        <label>1</label>
    </ligand>
</feature>
<feature type="binding site" evidence="1">
    <location>
        <begin position="95"/>
        <end position="98"/>
    </location>
    <ligand>
        <name>substrate</name>
    </ligand>
</feature>
<feature type="binding site" evidence="1">
    <location>
        <position position="117"/>
    </location>
    <ligand>
        <name>substrate</name>
    </ligand>
</feature>
<feature type="binding site" evidence="1">
    <location>
        <position position="118"/>
    </location>
    <ligand>
        <name>Mg(2+)</name>
        <dbReference type="ChEBI" id="CHEBI:18420"/>
        <label>2</label>
    </ligand>
</feature>
<feature type="binding site" evidence="1">
    <location>
        <position position="241"/>
    </location>
    <ligand>
        <name>substrate</name>
    </ligand>
</feature>
<feature type="binding site" evidence="1">
    <location>
        <position position="269"/>
    </location>
    <ligand>
        <name>Mg(2+)</name>
        <dbReference type="ChEBI" id="CHEBI:18420"/>
        <label>2</label>
    </ligand>
</feature>
<feature type="binding site" evidence="1">
    <location>
        <begin position="313"/>
        <end position="315"/>
    </location>
    <ligand>
        <name>substrate</name>
    </ligand>
</feature>
<feature type="binding site" evidence="1">
    <location>
        <position position="495"/>
    </location>
    <ligand>
        <name>ATP</name>
        <dbReference type="ChEBI" id="CHEBI:30616"/>
    </ligand>
</feature>
<feature type="binding site" evidence="1">
    <location>
        <position position="532"/>
    </location>
    <ligand>
        <name>ATP</name>
        <dbReference type="ChEBI" id="CHEBI:30616"/>
    </ligand>
</feature>
<feature type="binding site" evidence="1">
    <location>
        <position position="533"/>
    </location>
    <ligand>
        <name>Mg(2+)</name>
        <dbReference type="ChEBI" id="CHEBI:18420"/>
        <label>1</label>
    </ligand>
</feature>
<feature type="binding site" evidence="1">
    <location>
        <position position="535"/>
    </location>
    <ligand>
        <name>substrate</name>
    </ligand>
</feature>